<name>COAX_GLOVI</name>
<proteinExistence type="inferred from homology"/>
<dbReference type="EC" id="2.7.1.33" evidence="1"/>
<dbReference type="EMBL" id="BA000045">
    <property type="protein sequence ID" value="BAC90935.1"/>
    <property type="molecule type" value="Genomic_DNA"/>
</dbReference>
<dbReference type="RefSeq" id="NP_925940.1">
    <property type="nucleotide sequence ID" value="NC_005125.1"/>
</dbReference>
<dbReference type="RefSeq" id="WP_011142987.1">
    <property type="nucleotide sequence ID" value="NC_005125.1"/>
</dbReference>
<dbReference type="SMR" id="Q7NCI5"/>
<dbReference type="FunCoup" id="Q7NCI5">
    <property type="interactions" value="127"/>
</dbReference>
<dbReference type="STRING" id="251221.gene:10760498"/>
<dbReference type="EnsemblBacteria" id="BAC90935">
    <property type="protein sequence ID" value="BAC90935"/>
    <property type="gene ID" value="BAC90935"/>
</dbReference>
<dbReference type="KEGG" id="gvi:glr2994"/>
<dbReference type="PATRIC" id="fig|251221.4.peg.3023"/>
<dbReference type="eggNOG" id="COG1521">
    <property type="taxonomic scope" value="Bacteria"/>
</dbReference>
<dbReference type="HOGENOM" id="CLU_066627_2_1_3"/>
<dbReference type="InParanoid" id="Q7NCI5"/>
<dbReference type="OrthoDB" id="482945at2"/>
<dbReference type="PhylomeDB" id="Q7NCI5"/>
<dbReference type="UniPathway" id="UPA00241">
    <property type="reaction ID" value="UER00352"/>
</dbReference>
<dbReference type="Proteomes" id="UP000000557">
    <property type="component" value="Chromosome"/>
</dbReference>
<dbReference type="GO" id="GO:0005737">
    <property type="term" value="C:cytoplasm"/>
    <property type="evidence" value="ECO:0007669"/>
    <property type="project" value="UniProtKB-SubCell"/>
</dbReference>
<dbReference type="GO" id="GO:0005524">
    <property type="term" value="F:ATP binding"/>
    <property type="evidence" value="ECO:0007669"/>
    <property type="project" value="UniProtKB-UniRule"/>
</dbReference>
<dbReference type="GO" id="GO:0046872">
    <property type="term" value="F:metal ion binding"/>
    <property type="evidence" value="ECO:0007669"/>
    <property type="project" value="UniProtKB-KW"/>
</dbReference>
<dbReference type="GO" id="GO:0004594">
    <property type="term" value="F:pantothenate kinase activity"/>
    <property type="evidence" value="ECO:0007669"/>
    <property type="project" value="UniProtKB-UniRule"/>
</dbReference>
<dbReference type="GO" id="GO:0015937">
    <property type="term" value="P:coenzyme A biosynthetic process"/>
    <property type="evidence" value="ECO:0007669"/>
    <property type="project" value="UniProtKB-UniRule"/>
</dbReference>
<dbReference type="CDD" id="cd24015">
    <property type="entry name" value="ASKHA_NBD_PanK-III"/>
    <property type="match status" value="1"/>
</dbReference>
<dbReference type="Gene3D" id="3.30.420.40">
    <property type="match status" value="1"/>
</dbReference>
<dbReference type="HAMAP" id="MF_01274">
    <property type="entry name" value="Pantothen_kinase_3"/>
    <property type="match status" value="1"/>
</dbReference>
<dbReference type="InterPro" id="IPR043129">
    <property type="entry name" value="ATPase_NBD"/>
</dbReference>
<dbReference type="InterPro" id="IPR004619">
    <property type="entry name" value="Type_III_PanK"/>
</dbReference>
<dbReference type="NCBIfam" id="TIGR00671">
    <property type="entry name" value="baf"/>
    <property type="match status" value="1"/>
</dbReference>
<dbReference type="NCBIfam" id="NF009871">
    <property type="entry name" value="PRK13331.1"/>
    <property type="match status" value="1"/>
</dbReference>
<dbReference type="PANTHER" id="PTHR34265">
    <property type="entry name" value="TYPE III PANTOTHENATE KINASE"/>
    <property type="match status" value="1"/>
</dbReference>
<dbReference type="PANTHER" id="PTHR34265:SF1">
    <property type="entry name" value="TYPE III PANTOTHENATE KINASE"/>
    <property type="match status" value="1"/>
</dbReference>
<dbReference type="Pfam" id="PF03309">
    <property type="entry name" value="Pan_kinase"/>
    <property type="match status" value="1"/>
</dbReference>
<dbReference type="SUPFAM" id="SSF53067">
    <property type="entry name" value="Actin-like ATPase domain"/>
    <property type="match status" value="2"/>
</dbReference>
<accession>Q7NCI5</accession>
<reference key="1">
    <citation type="journal article" date="2003" name="DNA Res.">
        <title>Complete genome structure of Gloeobacter violaceus PCC 7421, a cyanobacterium that lacks thylakoids.</title>
        <authorList>
            <person name="Nakamura Y."/>
            <person name="Kaneko T."/>
            <person name="Sato S."/>
            <person name="Mimuro M."/>
            <person name="Miyashita H."/>
            <person name="Tsuchiya T."/>
            <person name="Sasamoto S."/>
            <person name="Watanabe A."/>
            <person name="Kawashima K."/>
            <person name="Kishida Y."/>
            <person name="Kiyokawa C."/>
            <person name="Kohara M."/>
            <person name="Matsumoto M."/>
            <person name="Matsuno A."/>
            <person name="Nakazaki N."/>
            <person name="Shimpo S."/>
            <person name="Takeuchi C."/>
            <person name="Yamada M."/>
            <person name="Tabata S."/>
        </authorList>
    </citation>
    <scope>NUCLEOTIDE SEQUENCE [LARGE SCALE GENOMIC DNA]</scope>
    <source>
        <strain>ATCC 29082 / PCC 7421</strain>
    </source>
</reference>
<gene>
    <name evidence="1" type="primary">coaX</name>
    <name type="ordered locus">glr2994</name>
</gene>
<keyword id="KW-0067">ATP-binding</keyword>
<keyword id="KW-0173">Coenzyme A biosynthesis</keyword>
<keyword id="KW-0963">Cytoplasm</keyword>
<keyword id="KW-0418">Kinase</keyword>
<keyword id="KW-0479">Metal-binding</keyword>
<keyword id="KW-0547">Nucleotide-binding</keyword>
<keyword id="KW-0630">Potassium</keyword>
<keyword id="KW-1185">Reference proteome</keyword>
<keyword id="KW-0808">Transferase</keyword>
<sequence length="229" mass="24781">MWLAVNIGNSRQHWGWFTGTKLVRTLDFPLTHWDAQAPDAAEQIVVASVTTTHLERWRTLPHARILNLADVPLSGTYPTLGIDRALNLIAAADAYGCPALVTDFGTAITLSAVDEFGRFCGGAILPGLGTQLRALEHFTAALPAVDLPEPWPPLLARTTQAAIQSGVVRVTLAGLAQFLESWKRQYPGGISVATGGDSERVHRWLPDLFDVQDTHLTLWGICVAARGAD</sequence>
<feature type="chain" id="PRO_0000270875" description="Type III pantothenate kinase">
    <location>
        <begin position="1"/>
        <end position="229"/>
    </location>
</feature>
<feature type="active site" description="Proton acceptor" evidence="1">
    <location>
        <position position="83"/>
    </location>
</feature>
<feature type="binding site" evidence="1">
    <location>
        <begin position="6"/>
        <end position="13"/>
    </location>
    <ligand>
        <name>ATP</name>
        <dbReference type="ChEBI" id="CHEBI:30616"/>
    </ligand>
</feature>
<feature type="binding site" evidence="1">
    <location>
        <position position="77"/>
    </location>
    <ligand>
        <name>substrate</name>
    </ligand>
</feature>
<feature type="binding site" evidence="1">
    <location>
        <begin position="81"/>
        <end position="84"/>
    </location>
    <ligand>
        <name>substrate</name>
    </ligand>
</feature>
<feature type="binding site" evidence="1">
    <location>
        <position position="103"/>
    </location>
    <ligand>
        <name>K(+)</name>
        <dbReference type="ChEBI" id="CHEBI:29103"/>
    </ligand>
</feature>
<feature type="binding site" evidence="1">
    <location>
        <position position="106"/>
    </location>
    <ligand>
        <name>ATP</name>
        <dbReference type="ChEBI" id="CHEBI:30616"/>
    </ligand>
</feature>
<feature type="binding site" evidence="1">
    <location>
        <position position="159"/>
    </location>
    <ligand>
        <name>substrate</name>
    </ligand>
</feature>
<organism>
    <name type="scientific">Gloeobacter violaceus (strain ATCC 29082 / PCC 7421)</name>
    <dbReference type="NCBI Taxonomy" id="251221"/>
    <lineage>
        <taxon>Bacteria</taxon>
        <taxon>Bacillati</taxon>
        <taxon>Cyanobacteriota</taxon>
        <taxon>Cyanophyceae</taxon>
        <taxon>Gloeobacterales</taxon>
        <taxon>Gloeobacteraceae</taxon>
        <taxon>Gloeobacter</taxon>
    </lineage>
</organism>
<protein>
    <recommendedName>
        <fullName evidence="1">Type III pantothenate kinase</fullName>
        <ecNumber evidence="1">2.7.1.33</ecNumber>
    </recommendedName>
    <alternativeName>
        <fullName evidence="1">PanK-III</fullName>
    </alternativeName>
    <alternativeName>
        <fullName evidence="1">Pantothenic acid kinase</fullName>
    </alternativeName>
</protein>
<evidence type="ECO:0000255" key="1">
    <source>
        <dbReference type="HAMAP-Rule" id="MF_01274"/>
    </source>
</evidence>
<comment type="function">
    <text evidence="1">Catalyzes the phosphorylation of pantothenate (Pan), the first step in CoA biosynthesis.</text>
</comment>
<comment type="catalytic activity">
    <reaction evidence="1">
        <text>(R)-pantothenate + ATP = (R)-4'-phosphopantothenate + ADP + H(+)</text>
        <dbReference type="Rhea" id="RHEA:16373"/>
        <dbReference type="ChEBI" id="CHEBI:10986"/>
        <dbReference type="ChEBI" id="CHEBI:15378"/>
        <dbReference type="ChEBI" id="CHEBI:29032"/>
        <dbReference type="ChEBI" id="CHEBI:30616"/>
        <dbReference type="ChEBI" id="CHEBI:456216"/>
        <dbReference type="EC" id="2.7.1.33"/>
    </reaction>
</comment>
<comment type="cofactor">
    <cofactor evidence="1">
        <name>NH4(+)</name>
        <dbReference type="ChEBI" id="CHEBI:28938"/>
    </cofactor>
    <cofactor evidence="1">
        <name>K(+)</name>
        <dbReference type="ChEBI" id="CHEBI:29103"/>
    </cofactor>
    <text evidence="1">A monovalent cation. Ammonium or potassium.</text>
</comment>
<comment type="pathway">
    <text evidence="1">Cofactor biosynthesis; coenzyme A biosynthesis; CoA from (R)-pantothenate: step 1/5.</text>
</comment>
<comment type="subunit">
    <text evidence="1">Homodimer.</text>
</comment>
<comment type="subcellular location">
    <subcellularLocation>
        <location evidence="1">Cytoplasm</location>
    </subcellularLocation>
</comment>
<comment type="similarity">
    <text evidence="1">Belongs to the type III pantothenate kinase family.</text>
</comment>